<comment type="function">
    <text evidence="1">Essential subunit of the Sec protein translocation channel SecYEG. Clamps together the 2 halves of SecY. May contact the channel plug during translocation.</text>
</comment>
<comment type="subunit">
    <text evidence="1">Component of the Sec protein translocase complex. Heterotrimer consisting of SecY, SecE and SecG subunits. The heterotrimers can form oligomers, although 1 heterotrimer is thought to be able to translocate proteins. Interacts with the ribosome. Interacts with SecDF, and other proteins may be involved. Interacts with SecA.</text>
</comment>
<comment type="subcellular location">
    <subcellularLocation>
        <location evidence="1">Cell inner membrane</location>
        <topology evidence="1">Single-pass membrane protein</topology>
    </subcellularLocation>
</comment>
<comment type="similarity">
    <text evidence="1">Belongs to the SecE/SEC61-gamma family.</text>
</comment>
<proteinExistence type="inferred from homology"/>
<sequence>MFKEYKIYKFFEQVKQETYKVVWPTRKELVASTLVVVVAVFIFSLICLVLDYSIHNIMQLLLNIGK</sequence>
<protein>
    <recommendedName>
        <fullName evidence="1">Protein translocase subunit SecE</fullName>
    </recommendedName>
</protein>
<feature type="chain" id="PRO_0000273142" description="Protein translocase subunit SecE">
    <location>
        <begin position="1"/>
        <end position="66"/>
    </location>
</feature>
<feature type="transmembrane region" description="Helical" evidence="1">
    <location>
        <begin position="29"/>
        <end position="49"/>
    </location>
</feature>
<evidence type="ECO:0000255" key="1">
    <source>
        <dbReference type="HAMAP-Rule" id="MF_00422"/>
    </source>
</evidence>
<dbReference type="EMBL" id="AF502171">
    <property type="protein sequence ID" value="AAM90916.1"/>
    <property type="molecule type" value="Genomic_DNA"/>
</dbReference>
<dbReference type="RefSeq" id="WP_004996644.1">
    <property type="nucleotide sequence ID" value="NZ_CP040325.1"/>
</dbReference>
<dbReference type="SMR" id="Q7WWR6"/>
<dbReference type="GeneID" id="95361890"/>
<dbReference type="OMA" id="DIREVWM"/>
<dbReference type="GO" id="GO:0005886">
    <property type="term" value="C:plasma membrane"/>
    <property type="evidence" value="ECO:0007669"/>
    <property type="project" value="UniProtKB-SubCell"/>
</dbReference>
<dbReference type="GO" id="GO:0008320">
    <property type="term" value="F:protein transmembrane transporter activity"/>
    <property type="evidence" value="ECO:0007669"/>
    <property type="project" value="UniProtKB-UniRule"/>
</dbReference>
<dbReference type="GO" id="GO:0065002">
    <property type="term" value="P:intracellular protein transmembrane transport"/>
    <property type="evidence" value="ECO:0007669"/>
    <property type="project" value="UniProtKB-UniRule"/>
</dbReference>
<dbReference type="GO" id="GO:0009306">
    <property type="term" value="P:protein secretion"/>
    <property type="evidence" value="ECO:0007669"/>
    <property type="project" value="UniProtKB-UniRule"/>
</dbReference>
<dbReference type="GO" id="GO:0006605">
    <property type="term" value="P:protein targeting"/>
    <property type="evidence" value="ECO:0007669"/>
    <property type="project" value="UniProtKB-UniRule"/>
</dbReference>
<dbReference type="GO" id="GO:0043952">
    <property type="term" value="P:protein transport by the Sec complex"/>
    <property type="evidence" value="ECO:0007669"/>
    <property type="project" value="UniProtKB-UniRule"/>
</dbReference>
<dbReference type="Gene3D" id="1.20.5.1030">
    <property type="entry name" value="Preprotein translocase secy subunit"/>
    <property type="match status" value="1"/>
</dbReference>
<dbReference type="HAMAP" id="MF_00422">
    <property type="entry name" value="SecE"/>
    <property type="match status" value="1"/>
</dbReference>
<dbReference type="InterPro" id="IPR005807">
    <property type="entry name" value="SecE_bac"/>
</dbReference>
<dbReference type="InterPro" id="IPR038379">
    <property type="entry name" value="SecE_sf"/>
</dbReference>
<dbReference type="InterPro" id="IPR001901">
    <property type="entry name" value="Translocase_SecE/Sec61-g"/>
</dbReference>
<dbReference type="NCBIfam" id="TIGR00964">
    <property type="entry name" value="secE_bact"/>
    <property type="match status" value="1"/>
</dbReference>
<dbReference type="PANTHER" id="PTHR33910">
    <property type="entry name" value="PROTEIN TRANSLOCASE SUBUNIT SECE"/>
    <property type="match status" value="1"/>
</dbReference>
<dbReference type="PANTHER" id="PTHR33910:SF1">
    <property type="entry name" value="PROTEIN TRANSLOCASE SUBUNIT SECE"/>
    <property type="match status" value="1"/>
</dbReference>
<dbReference type="Pfam" id="PF00584">
    <property type="entry name" value="SecE"/>
    <property type="match status" value="1"/>
</dbReference>
<dbReference type="PROSITE" id="PS01067">
    <property type="entry name" value="SECE_SEC61G"/>
    <property type="match status" value="1"/>
</dbReference>
<name>SECE_RICPA</name>
<organism>
    <name type="scientific">Rickettsia parkeri</name>
    <dbReference type="NCBI Taxonomy" id="35792"/>
    <lineage>
        <taxon>Bacteria</taxon>
        <taxon>Pseudomonadati</taxon>
        <taxon>Pseudomonadota</taxon>
        <taxon>Alphaproteobacteria</taxon>
        <taxon>Rickettsiales</taxon>
        <taxon>Rickettsiaceae</taxon>
        <taxon>Rickettsieae</taxon>
        <taxon>Rickettsia</taxon>
        <taxon>spotted fever group</taxon>
    </lineage>
</organism>
<gene>
    <name evidence="1" type="primary">secE</name>
</gene>
<accession>Q7WWR6</accession>
<reference key="1">
    <citation type="journal article" date="2002" name="Mol. Biol. Evol.">
        <title>Proliferation and deterioration of Rickettsia palindromic elements.</title>
        <authorList>
            <person name="Amiri H."/>
            <person name="Alsmark C.M."/>
            <person name="Andersson S.G.E."/>
        </authorList>
    </citation>
    <scope>NUCLEOTIDE SEQUENCE [GENOMIC DNA]</scope>
</reference>
<keyword id="KW-0997">Cell inner membrane</keyword>
<keyword id="KW-1003">Cell membrane</keyword>
<keyword id="KW-0472">Membrane</keyword>
<keyword id="KW-0653">Protein transport</keyword>
<keyword id="KW-0811">Translocation</keyword>
<keyword id="KW-0812">Transmembrane</keyword>
<keyword id="KW-1133">Transmembrane helix</keyword>
<keyword id="KW-0813">Transport</keyword>